<sequence>MAVFLLATSTIMFPTKIEAADCNGACSPFEVPPCRSSDCRCVPIGLFVGFCIHPTGLSSVAKMVDEHPNLCQSDDECMKKGSGNFCARYPNNYIDYGWCFDSDSEALKGFLAMPRATTK</sequence>
<keyword id="KW-1015">Disulfide bond</keyword>
<keyword id="KW-0960">Knottin</keyword>
<keyword id="KW-0708">Seed storage protein</keyword>
<keyword id="KW-0732">Signal</keyword>
<keyword id="KW-0758">Storage protein</keyword>
<keyword id="KW-0800">Toxin</keyword>
<proteinExistence type="inferred from homology"/>
<name>ALB1_GLYSO</name>
<organism>
    <name type="scientific">Glycine soja</name>
    <name type="common">Wild soybean</name>
    <dbReference type="NCBI Taxonomy" id="3848"/>
    <lineage>
        <taxon>Eukaryota</taxon>
        <taxon>Viridiplantae</taxon>
        <taxon>Streptophyta</taxon>
        <taxon>Embryophyta</taxon>
        <taxon>Tracheophyta</taxon>
        <taxon>Spermatophyta</taxon>
        <taxon>Magnoliopsida</taxon>
        <taxon>eudicotyledons</taxon>
        <taxon>Gunneridae</taxon>
        <taxon>Pentapetalae</taxon>
        <taxon>rosids</taxon>
        <taxon>fabids</taxon>
        <taxon>Fabales</taxon>
        <taxon>Fabaceae</taxon>
        <taxon>Papilionoideae</taxon>
        <taxon>50 kb inversion clade</taxon>
        <taxon>NPAAA clade</taxon>
        <taxon>indigoferoid/millettioid clade</taxon>
        <taxon>Phaseoleae</taxon>
        <taxon>Glycine</taxon>
        <taxon>Glycine subgen. Soja</taxon>
    </lineage>
</organism>
<accession>Q9ZQX0</accession>
<reference key="1">
    <citation type="journal article" date="1999" name="Ying Yong Yu Huan Jing Sheng Wu Xue Bao">
        <title>Analysis of leginsulin gene in soybean cultivar (Glycine max) and wild species (Glycine soja).</title>
        <authorList>
            <person name="Tan J.Z."/>
            <person name="Lou C.F."/>
            <person name="Hirano H."/>
        </authorList>
    </citation>
    <scope>NUCLEOTIDE SEQUENCE [GENOMIC DNA]</scope>
</reference>
<protein>
    <recommendedName>
        <fullName>Albumin-1</fullName>
        <shortName>A1</shortName>
    </recommendedName>
    <component>
        <recommendedName>
            <fullName>Albumin-1 chain b</fullName>
            <shortName>A1b</shortName>
        </recommendedName>
        <alternativeName>
            <fullName>Leginsulin</fullName>
        </alternativeName>
    </component>
    <component>
        <recommendedName>
            <fullName>Albumin-1 chain a</fullName>
            <shortName>A1a</shortName>
        </recommendedName>
    </component>
</protein>
<evidence type="ECO:0000250" key="1"/>
<evidence type="ECO:0000255" key="2"/>
<comment type="function">
    <text evidence="1">A1b binds to basic 7S globulin (BG) and stimulates its phosphorylation activity.</text>
</comment>
<comment type="domain">
    <text evidence="1">The presence of a 'disulfide through disulfide knot' structurally defines this protein as a knottin.</text>
</comment>
<comment type="PTM">
    <text>The C-terminal glycine may be removed from A1b.</text>
</comment>
<dbReference type="EMBL" id="AJ011935">
    <property type="protein sequence ID" value="CAA09880.2"/>
    <property type="molecule type" value="Genomic_DNA"/>
</dbReference>
<dbReference type="SMR" id="Q9ZQX0"/>
<dbReference type="GO" id="GO:0045735">
    <property type="term" value="F:nutrient reservoir activity"/>
    <property type="evidence" value="ECO:0007669"/>
    <property type="project" value="UniProtKB-KW"/>
</dbReference>
<dbReference type="GO" id="GO:0090729">
    <property type="term" value="F:toxin activity"/>
    <property type="evidence" value="ECO:0007669"/>
    <property type="project" value="UniProtKB-KW"/>
</dbReference>
<dbReference type="InterPro" id="IPR012512">
    <property type="entry name" value="Albumin_I"/>
</dbReference>
<dbReference type="InterPro" id="IPR032000">
    <property type="entry name" value="Albumin_I_a"/>
</dbReference>
<dbReference type="Pfam" id="PF08027">
    <property type="entry name" value="Albumin_I"/>
    <property type="match status" value="1"/>
</dbReference>
<dbReference type="Pfam" id="PF16720">
    <property type="entry name" value="Albumin_I_a"/>
    <property type="match status" value="1"/>
</dbReference>
<dbReference type="SUPFAM" id="SSF57059">
    <property type="entry name" value="omega toxin-like"/>
    <property type="match status" value="1"/>
</dbReference>
<feature type="signal peptide" evidence="2">
    <location>
        <begin position="1"/>
        <end position="19"/>
    </location>
</feature>
<feature type="chain" id="PRO_0000032239" description="Albumin-1 chain b" evidence="1">
    <location>
        <begin position="20"/>
        <end position="56"/>
    </location>
</feature>
<feature type="propeptide" id="PRO_0000032240" evidence="2">
    <location>
        <begin position="57"/>
        <end position="64"/>
    </location>
</feature>
<feature type="chain" id="PRO_0000032241" description="Albumin-1 chain a" evidence="2">
    <location>
        <begin position="65"/>
        <end position="117"/>
    </location>
</feature>
<feature type="propeptide" id="PRO_0000032242" evidence="2">
    <location>
        <begin position="118"/>
        <end position="119"/>
    </location>
</feature>
<feature type="disulfide bond" evidence="1">
    <location>
        <begin position="22"/>
        <end position="39"/>
    </location>
</feature>
<feature type="disulfide bond" evidence="1">
    <location>
        <begin position="26"/>
        <end position="41"/>
    </location>
</feature>
<feature type="disulfide bond" evidence="1">
    <location>
        <begin position="34"/>
        <end position="51"/>
    </location>
</feature>